<protein>
    <recommendedName>
        <fullName evidence="1">Thymidylate kinase</fullName>
        <ecNumber evidence="1">2.7.4.9</ecNumber>
    </recommendedName>
    <alternativeName>
        <fullName evidence="1">dTMP kinase</fullName>
    </alternativeName>
</protein>
<evidence type="ECO:0000255" key="1">
    <source>
        <dbReference type="HAMAP-Rule" id="MF_00165"/>
    </source>
</evidence>
<name>KTHY_RICPU</name>
<proteinExistence type="inferred from homology"/>
<gene>
    <name evidence="1" type="primary">tmk</name>
    <name type="ordered locus">RPR_06495</name>
</gene>
<sequence length="203" mass="23416">MNNLKQGKFITFEGGEGIGKSTQSQMLYEYLQSQNTPVILTREVGGTIVAEKMREILVHEELLPMSELLQAMAARYDHMARKIIPALQEGHIVICDRFIDSTVCYQGLELENGIDLVYNLHKTLMPSLMPDITFFIDVEPDTAIKRVNSRNMNNKFDIRGIDFYKTIYYCFKELSNRFPERIKTIKASDLSPLEVHELIKKHL</sequence>
<dbReference type="EC" id="2.7.4.9" evidence="1"/>
<dbReference type="EMBL" id="CP001227">
    <property type="protein sequence ID" value="ACR47805.1"/>
    <property type="molecule type" value="Genomic_DNA"/>
</dbReference>
<dbReference type="RefSeq" id="WP_012736973.1">
    <property type="nucleotide sequence ID" value="NC_012730.1"/>
</dbReference>
<dbReference type="SMR" id="C4K2K8"/>
<dbReference type="KEGG" id="rpk:RPR_06495"/>
<dbReference type="HOGENOM" id="CLU_049131_0_2_5"/>
<dbReference type="Proteomes" id="UP000005015">
    <property type="component" value="Chromosome"/>
</dbReference>
<dbReference type="GO" id="GO:0005829">
    <property type="term" value="C:cytosol"/>
    <property type="evidence" value="ECO:0007669"/>
    <property type="project" value="TreeGrafter"/>
</dbReference>
<dbReference type="GO" id="GO:0005524">
    <property type="term" value="F:ATP binding"/>
    <property type="evidence" value="ECO:0007669"/>
    <property type="project" value="UniProtKB-UniRule"/>
</dbReference>
<dbReference type="GO" id="GO:0004798">
    <property type="term" value="F:dTMP kinase activity"/>
    <property type="evidence" value="ECO:0007669"/>
    <property type="project" value="UniProtKB-UniRule"/>
</dbReference>
<dbReference type="GO" id="GO:0006233">
    <property type="term" value="P:dTDP biosynthetic process"/>
    <property type="evidence" value="ECO:0007669"/>
    <property type="project" value="InterPro"/>
</dbReference>
<dbReference type="GO" id="GO:0006235">
    <property type="term" value="P:dTTP biosynthetic process"/>
    <property type="evidence" value="ECO:0007669"/>
    <property type="project" value="UniProtKB-UniRule"/>
</dbReference>
<dbReference type="GO" id="GO:0006227">
    <property type="term" value="P:dUDP biosynthetic process"/>
    <property type="evidence" value="ECO:0007669"/>
    <property type="project" value="TreeGrafter"/>
</dbReference>
<dbReference type="CDD" id="cd01672">
    <property type="entry name" value="TMPK"/>
    <property type="match status" value="1"/>
</dbReference>
<dbReference type="FunFam" id="3.40.50.300:FF:000225">
    <property type="entry name" value="Thymidylate kinase"/>
    <property type="match status" value="1"/>
</dbReference>
<dbReference type="Gene3D" id="3.40.50.300">
    <property type="entry name" value="P-loop containing nucleotide triphosphate hydrolases"/>
    <property type="match status" value="1"/>
</dbReference>
<dbReference type="HAMAP" id="MF_00165">
    <property type="entry name" value="Thymidylate_kinase"/>
    <property type="match status" value="1"/>
</dbReference>
<dbReference type="InterPro" id="IPR027417">
    <property type="entry name" value="P-loop_NTPase"/>
</dbReference>
<dbReference type="InterPro" id="IPR039430">
    <property type="entry name" value="Thymidylate_kin-like_dom"/>
</dbReference>
<dbReference type="InterPro" id="IPR018095">
    <property type="entry name" value="Thymidylate_kin_CS"/>
</dbReference>
<dbReference type="InterPro" id="IPR018094">
    <property type="entry name" value="Thymidylate_kinase"/>
</dbReference>
<dbReference type="NCBIfam" id="TIGR00041">
    <property type="entry name" value="DTMP_kinase"/>
    <property type="match status" value="1"/>
</dbReference>
<dbReference type="PANTHER" id="PTHR10344">
    <property type="entry name" value="THYMIDYLATE KINASE"/>
    <property type="match status" value="1"/>
</dbReference>
<dbReference type="PANTHER" id="PTHR10344:SF4">
    <property type="entry name" value="UMP-CMP KINASE 2, MITOCHONDRIAL"/>
    <property type="match status" value="1"/>
</dbReference>
<dbReference type="Pfam" id="PF02223">
    <property type="entry name" value="Thymidylate_kin"/>
    <property type="match status" value="1"/>
</dbReference>
<dbReference type="SUPFAM" id="SSF52540">
    <property type="entry name" value="P-loop containing nucleoside triphosphate hydrolases"/>
    <property type="match status" value="1"/>
</dbReference>
<dbReference type="PROSITE" id="PS01331">
    <property type="entry name" value="THYMIDYLATE_KINASE"/>
    <property type="match status" value="1"/>
</dbReference>
<reference key="1">
    <citation type="journal article" date="2009" name="PLoS ONE">
        <title>Genome sequence of the endosymbiont Rickettsia peacockii and comparison with virulent Rickettsia rickettsii: identification of virulence factors.</title>
        <authorList>
            <person name="Felsheim R.F."/>
            <person name="Kurtti T.J."/>
            <person name="Munderloh U.G."/>
        </authorList>
    </citation>
    <scope>NUCLEOTIDE SEQUENCE [LARGE SCALE GENOMIC DNA]</scope>
    <source>
        <strain>Rustic</strain>
    </source>
</reference>
<keyword id="KW-0067">ATP-binding</keyword>
<keyword id="KW-0418">Kinase</keyword>
<keyword id="KW-0545">Nucleotide biosynthesis</keyword>
<keyword id="KW-0547">Nucleotide-binding</keyword>
<keyword id="KW-0808">Transferase</keyword>
<feature type="chain" id="PRO_1000203627" description="Thymidylate kinase">
    <location>
        <begin position="1"/>
        <end position="203"/>
    </location>
</feature>
<feature type="binding site" evidence="1">
    <location>
        <begin position="14"/>
        <end position="21"/>
    </location>
    <ligand>
        <name>ATP</name>
        <dbReference type="ChEBI" id="CHEBI:30616"/>
    </ligand>
</feature>
<organism>
    <name type="scientific">Rickettsia peacockii (strain Rustic)</name>
    <dbReference type="NCBI Taxonomy" id="562019"/>
    <lineage>
        <taxon>Bacteria</taxon>
        <taxon>Pseudomonadati</taxon>
        <taxon>Pseudomonadota</taxon>
        <taxon>Alphaproteobacteria</taxon>
        <taxon>Rickettsiales</taxon>
        <taxon>Rickettsiaceae</taxon>
        <taxon>Rickettsieae</taxon>
        <taxon>Rickettsia</taxon>
        <taxon>spotted fever group</taxon>
    </lineage>
</organism>
<comment type="function">
    <text evidence="1">Phosphorylation of dTMP to form dTDP in both de novo and salvage pathways of dTTP synthesis.</text>
</comment>
<comment type="catalytic activity">
    <reaction evidence="1">
        <text>dTMP + ATP = dTDP + ADP</text>
        <dbReference type="Rhea" id="RHEA:13517"/>
        <dbReference type="ChEBI" id="CHEBI:30616"/>
        <dbReference type="ChEBI" id="CHEBI:58369"/>
        <dbReference type="ChEBI" id="CHEBI:63528"/>
        <dbReference type="ChEBI" id="CHEBI:456216"/>
        <dbReference type="EC" id="2.7.4.9"/>
    </reaction>
</comment>
<comment type="similarity">
    <text evidence="1">Belongs to the thymidylate kinase family.</text>
</comment>
<accession>C4K2K8</accession>